<accession>G2WS86</accession>
<keyword id="KW-1003">Cell membrane</keyword>
<keyword id="KW-0325">Glycoprotein</keyword>
<keyword id="KW-0328">Glycosyltransferase</keyword>
<keyword id="KW-0472">Membrane</keyword>
<keyword id="KW-0505">Motor protein</keyword>
<keyword id="KW-0518">Myosin</keyword>
<keyword id="KW-1185">Reference proteome</keyword>
<keyword id="KW-0808">Transferase</keyword>
<keyword id="KW-0812">Transmembrane</keyword>
<keyword id="KW-1133">Transmembrane helix</keyword>
<keyword id="KW-0843">Virulence</keyword>
<gene>
    <name evidence="7" type="primary">CHS5</name>
    <name type="ORF">VDAG_00419</name>
</gene>
<organism>
    <name type="scientific">Verticillium dahliae (strain VdLs.17 / ATCC MYA-4575 / FGSC 10137)</name>
    <name type="common">Verticillium wilt</name>
    <dbReference type="NCBI Taxonomy" id="498257"/>
    <lineage>
        <taxon>Eukaryota</taxon>
        <taxon>Fungi</taxon>
        <taxon>Dikarya</taxon>
        <taxon>Ascomycota</taxon>
        <taxon>Pezizomycotina</taxon>
        <taxon>Sordariomycetes</taxon>
        <taxon>Hypocreomycetidae</taxon>
        <taxon>Glomerellales</taxon>
        <taxon>Plectosphaerellaceae</taxon>
        <taxon>Verticillium</taxon>
    </lineage>
</organism>
<name>CHS5_VERDV</name>
<reference key="1">
    <citation type="journal article" date="2011" name="PLoS Pathog.">
        <title>Comparative genomics yields insights into niche adaptation of plant vascular wilt pathogens.</title>
        <authorList>
            <person name="Klosterman S.J."/>
            <person name="Subbarao K.V."/>
            <person name="Kang S."/>
            <person name="Veronese P."/>
            <person name="Gold S.E."/>
            <person name="Thomma B.P.H.J."/>
            <person name="Chen Z."/>
            <person name="Henrissat B."/>
            <person name="Lee Y.-H."/>
            <person name="Park J."/>
            <person name="Garcia-Pedrajas M.D."/>
            <person name="Barbara D.J."/>
            <person name="Anchieta A."/>
            <person name="de Jonge R."/>
            <person name="Santhanam P."/>
            <person name="Maruthachalam K."/>
            <person name="Atallah Z."/>
            <person name="Amyotte S.G."/>
            <person name="Paz Z."/>
            <person name="Inderbitzin P."/>
            <person name="Hayes R.J."/>
            <person name="Heiman D.I."/>
            <person name="Young S."/>
            <person name="Zeng Q."/>
            <person name="Engels R."/>
            <person name="Galagan J."/>
            <person name="Cuomo C.A."/>
            <person name="Dobinson K.F."/>
            <person name="Ma L.-J."/>
        </authorList>
    </citation>
    <scope>NUCLEOTIDE SEQUENCE [LARGE SCALE GENOMIC DNA]</scope>
    <source>
        <strain>VdLs.17 / ATCC MYA-4575 / FGSC 10137</strain>
    </source>
</reference>
<reference key="2">
    <citation type="journal article" date="2022" name="J. Fungi">
        <title>Chitin Synthase Genes Are Differentially Required for Growth, Stress Response, and Virulence in Verticillium dahliae.</title>
        <authorList>
            <person name="Qin J."/>
            <person name="Zhao P."/>
            <person name="Ye Z."/>
            <person name="Sun L."/>
            <person name="Hu X."/>
            <person name="Zhang J."/>
        </authorList>
    </citation>
    <scope>FUNCTION</scope>
    <scope>DISRUPTION PHENOTYPE</scope>
</reference>
<proteinExistence type="inferred from homology"/>
<feature type="chain" id="PRO_0000460804" description="Chitin synthase 5">
    <location>
        <begin position="1"/>
        <end position="1793"/>
    </location>
</feature>
<feature type="transmembrane region" description="Helical" evidence="1">
    <location>
        <begin position="750"/>
        <end position="770"/>
    </location>
</feature>
<feature type="transmembrane region" description="Helical" evidence="1">
    <location>
        <begin position="786"/>
        <end position="806"/>
    </location>
</feature>
<feature type="transmembrane region" description="Helical" evidence="1">
    <location>
        <begin position="1056"/>
        <end position="1076"/>
    </location>
</feature>
<feature type="transmembrane region" description="Helical" evidence="1">
    <location>
        <begin position="1452"/>
        <end position="1472"/>
    </location>
</feature>
<feature type="transmembrane region" description="Helical" evidence="1">
    <location>
        <begin position="1479"/>
        <end position="1499"/>
    </location>
</feature>
<feature type="transmembrane region" description="Helical" evidence="1">
    <location>
        <begin position="1507"/>
        <end position="1527"/>
    </location>
</feature>
<feature type="domain" description="Cytochrome b5 heme-binding" evidence="2">
    <location>
        <begin position="815"/>
        <end position="877"/>
    </location>
</feature>
<feature type="domain" description="DEK-C" evidence="4">
    <location>
        <begin position="1735"/>
        <end position="1791"/>
    </location>
</feature>
<feature type="region of interest" description="Disordered" evidence="5">
    <location>
        <begin position="1"/>
        <end position="28"/>
    </location>
</feature>
<feature type="glycosylation site" description="N-linked (GlcNAc...) asparagine" evidence="3">
    <location>
        <position position="70"/>
    </location>
</feature>
<feature type="glycosylation site" description="N-linked (GlcNAc...) asparagine" evidence="3">
    <location>
        <position position="164"/>
    </location>
</feature>
<feature type="glycosylation site" description="N-linked (GlcNAc...) asparagine" evidence="3">
    <location>
        <position position="638"/>
    </location>
</feature>
<feature type="glycosylation site" description="N-linked (GlcNAc...) asparagine" evidence="3">
    <location>
        <position position="664"/>
    </location>
</feature>
<feature type="glycosylation site" description="N-linked (GlcNAc...) asparagine" evidence="3">
    <location>
        <position position="669"/>
    </location>
</feature>
<feature type="glycosylation site" description="N-linked (GlcNAc...) asparagine" evidence="3">
    <location>
        <position position="897"/>
    </location>
</feature>
<feature type="glycosylation site" description="N-linked (GlcNAc...) asparagine" evidence="3">
    <location>
        <position position="1019"/>
    </location>
</feature>
<feature type="glycosylation site" description="N-linked (GlcNAc...) asparagine" evidence="3">
    <location>
        <position position="1023"/>
    </location>
</feature>
<feature type="glycosylation site" description="N-linked (GlcNAc...) asparagine" evidence="3">
    <location>
        <position position="1421"/>
    </location>
</feature>
<feature type="glycosylation site" description="N-linked (GlcNAc...) asparagine" evidence="3">
    <location>
        <position position="1534"/>
    </location>
</feature>
<feature type="glycosylation site" description="N-linked (GlcNAc...) asparagine" evidence="3">
    <location>
        <position position="1705"/>
    </location>
</feature>
<dbReference type="EC" id="2.4.1.16" evidence="9"/>
<dbReference type="EMBL" id="DS572695">
    <property type="protein sequence ID" value="EGY13737.1"/>
    <property type="molecule type" value="Genomic_DNA"/>
</dbReference>
<dbReference type="RefSeq" id="XP_009650091.1">
    <property type="nucleotide sequence ID" value="XM_009651796.1"/>
</dbReference>
<dbReference type="STRING" id="498257.G2WS86"/>
<dbReference type="EnsemblFungi" id="EGY13737">
    <property type="protein sequence ID" value="EGY13737"/>
    <property type="gene ID" value="VDAG_00419"/>
</dbReference>
<dbReference type="GeneID" id="20701882"/>
<dbReference type="KEGG" id="vda:VDAG_00419"/>
<dbReference type="eggNOG" id="KOG2571">
    <property type="taxonomic scope" value="Eukaryota"/>
</dbReference>
<dbReference type="HOGENOM" id="CLU_000192_0_0_1"/>
<dbReference type="InParanoid" id="G2WS86"/>
<dbReference type="OMA" id="RLAEWAN"/>
<dbReference type="OrthoDB" id="13473at1028384"/>
<dbReference type="PHI-base" id="PHI:123307"/>
<dbReference type="Proteomes" id="UP000001611">
    <property type="component" value="Chromosome 2"/>
</dbReference>
<dbReference type="GO" id="GO:0030428">
    <property type="term" value="C:cell septum"/>
    <property type="evidence" value="ECO:0007669"/>
    <property type="project" value="TreeGrafter"/>
</dbReference>
<dbReference type="GO" id="GO:0016459">
    <property type="term" value="C:myosin complex"/>
    <property type="evidence" value="ECO:0007669"/>
    <property type="project" value="UniProtKB-KW"/>
</dbReference>
<dbReference type="GO" id="GO:0005886">
    <property type="term" value="C:plasma membrane"/>
    <property type="evidence" value="ECO:0007669"/>
    <property type="project" value="UniProtKB-SubCell"/>
</dbReference>
<dbReference type="GO" id="GO:0005524">
    <property type="term" value="F:ATP binding"/>
    <property type="evidence" value="ECO:0007669"/>
    <property type="project" value="InterPro"/>
</dbReference>
<dbReference type="GO" id="GO:0004100">
    <property type="term" value="F:chitin synthase activity"/>
    <property type="evidence" value="ECO:0007669"/>
    <property type="project" value="UniProtKB-EC"/>
</dbReference>
<dbReference type="GO" id="GO:0003774">
    <property type="term" value="F:cytoskeletal motor activity"/>
    <property type="evidence" value="ECO:0007669"/>
    <property type="project" value="InterPro"/>
</dbReference>
<dbReference type="GO" id="GO:0006031">
    <property type="term" value="P:chitin biosynthetic process"/>
    <property type="evidence" value="ECO:0007669"/>
    <property type="project" value="TreeGrafter"/>
</dbReference>
<dbReference type="GO" id="GO:0031505">
    <property type="term" value="P:fungal-type cell wall organization"/>
    <property type="evidence" value="ECO:0007669"/>
    <property type="project" value="TreeGrafter"/>
</dbReference>
<dbReference type="FunFam" id="1.10.10.820:FF:000010">
    <property type="entry name" value="Chitin synthase 6"/>
    <property type="match status" value="1"/>
</dbReference>
<dbReference type="Gene3D" id="1.10.10.820">
    <property type="match status" value="1"/>
</dbReference>
<dbReference type="Gene3D" id="3.10.120.10">
    <property type="entry name" value="Cytochrome b5-like heme/steroid binding domain"/>
    <property type="match status" value="1"/>
</dbReference>
<dbReference type="Gene3D" id="3.40.850.10">
    <property type="entry name" value="Kinesin motor domain"/>
    <property type="match status" value="1"/>
</dbReference>
<dbReference type="Gene3D" id="1.20.120.720">
    <property type="entry name" value="Myosin VI head, motor domain, U50 subdomain"/>
    <property type="match status" value="1"/>
</dbReference>
<dbReference type="InterPro" id="IPR004835">
    <property type="entry name" value="Chitin_synth"/>
</dbReference>
<dbReference type="InterPro" id="IPR001199">
    <property type="entry name" value="Cyt_B5-like_heme/steroid-bd"/>
</dbReference>
<dbReference type="InterPro" id="IPR036400">
    <property type="entry name" value="Cyt_B5-like_heme/steroid_sf"/>
</dbReference>
<dbReference type="InterPro" id="IPR014876">
    <property type="entry name" value="DEK_C"/>
</dbReference>
<dbReference type="InterPro" id="IPR036961">
    <property type="entry name" value="Kinesin_motor_dom_sf"/>
</dbReference>
<dbReference type="InterPro" id="IPR001609">
    <property type="entry name" value="Myosin_head_motor_dom-like"/>
</dbReference>
<dbReference type="InterPro" id="IPR029044">
    <property type="entry name" value="Nucleotide-diphossugar_trans"/>
</dbReference>
<dbReference type="InterPro" id="IPR027417">
    <property type="entry name" value="P-loop_NTPase"/>
</dbReference>
<dbReference type="PANTHER" id="PTHR22914">
    <property type="entry name" value="CHITIN SYNTHASE"/>
    <property type="match status" value="1"/>
</dbReference>
<dbReference type="PANTHER" id="PTHR22914:SF13">
    <property type="entry name" value="CHITIN SYNTHASE"/>
    <property type="match status" value="1"/>
</dbReference>
<dbReference type="Pfam" id="PF03142">
    <property type="entry name" value="Chitin_synth_2"/>
    <property type="match status" value="1"/>
</dbReference>
<dbReference type="Pfam" id="PF00173">
    <property type="entry name" value="Cyt-b5"/>
    <property type="match status" value="1"/>
</dbReference>
<dbReference type="Pfam" id="PF08766">
    <property type="entry name" value="DEK_C"/>
    <property type="match status" value="1"/>
</dbReference>
<dbReference type="SMART" id="SM01117">
    <property type="entry name" value="Cyt-b5"/>
    <property type="match status" value="2"/>
</dbReference>
<dbReference type="SMART" id="SM00242">
    <property type="entry name" value="MYSc"/>
    <property type="match status" value="1"/>
</dbReference>
<dbReference type="SUPFAM" id="SSF55856">
    <property type="entry name" value="Cytochrome b5-like heme/steroid binding domain"/>
    <property type="match status" value="1"/>
</dbReference>
<dbReference type="SUPFAM" id="SSF109715">
    <property type="entry name" value="DEK C-terminal domain"/>
    <property type="match status" value="1"/>
</dbReference>
<dbReference type="SUPFAM" id="SSF53448">
    <property type="entry name" value="Nucleotide-diphospho-sugar transferases"/>
    <property type="match status" value="1"/>
</dbReference>
<dbReference type="SUPFAM" id="SSF52540">
    <property type="entry name" value="P-loop containing nucleoside triphosphate hydrolases"/>
    <property type="match status" value="1"/>
</dbReference>
<dbReference type="PROSITE" id="PS50255">
    <property type="entry name" value="CYTOCHROME_B5_2"/>
    <property type="match status" value="1"/>
</dbReference>
<dbReference type="PROSITE" id="PS51998">
    <property type="entry name" value="DEK_C"/>
    <property type="match status" value="1"/>
</dbReference>
<evidence type="ECO:0000255" key="1"/>
<evidence type="ECO:0000255" key="2">
    <source>
        <dbReference type="PROSITE-ProRule" id="PRU00279"/>
    </source>
</evidence>
<evidence type="ECO:0000255" key="3">
    <source>
        <dbReference type="PROSITE-ProRule" id="PRU00498"/>
    </source>
</evidence>
<evidence type="ECO:0000255" key="4">
    <source>
        <dbReference type="PROSITE-ProRule" id="PRU01342"/>
    </source>
</evidence>
<evidence type="ECO:0000256" key="5">
    <source>
        <dbReference type="SAM" id="MobiDB-lite"/>
    </source>
</evidence>
<evidence type="ECO:0000269" key="6">
    <source>
    </source>
</evidence>
<evidence type="ECO:0000303" key="7">
    <source>
    </source>
</evidence>
<evidence type="ECO:0000305" key="8"/>
<evidence type="ECO:0000305" key="9">
    <source>
    </source>
</evidence>
<comment type="function">
    <text evidence="6 9">Polymerizes chitin, a structural polymer of the cell wall and septum, by transferring the sugar moiety of UDP-GlcNAc to the non-reducing end of the growing chitin polymer (Probable). Regulates Germination and Tolerance to Hyperosmotic Stress (PubMed:35887437). Plays a key role in pathogenicity (PubMed:35887437). Likely contributes to post-penetration virulence (PubMed:35887437).</text>
</comment>
<comment type="catalytic activity">
    <reaction evidence="9">
        <text>[(1-&gt;4)-N-acetyl-beta-D-glucosaminyl](n) + UDP-N-acetyl-alpha-D-glucosamine = [(1-&gt;4)-N-acetyl-beta-D-glucosaminyl](n+1) + UDP + H(+)</text>
        <dbReference type="Rhea" id="RHEA:16637"/>
        <dbReference type="Rhea" id="RHEA-COMP:9593"/>
        <dbReference type="Rhea" id="RHEA-COMP:9595"/>
        <dbReference type="ChEBI" id="CHEBI:15378"/>
        <dbReference type="ChEBI" id="CHEBI:17029"/>
        <dbReference type="ChEBI" id="CHEBI:57705"/>
        <dbReference type="ChEBI" id="CHEBI:58223"/>
        <dbReference type="EC" id="2.4.1.16"/>
    </reaction>
    <physiologicalReaction direction="left-to-right" evidence="9">
        <dbReference type="Rhea" id="RHEA:16638"/>
    </physiologicalReaction>
</comment>
<comment type="subcellular location">
    <subcellularLocation>
        <location evidence="8">Cell membrane</location>
        <topology evidence="1">Multi-pass membrane protein</topology>
    </subcellularLocation>
</comment>
<comment type="disruption phenotype">
    <text evidence="6">Reduces the germination rate to about half and leads to hypersensitivity to hyperosmotic stress (PubMed:35887437). Exhibits a significant reduced pathogenicity in Arabidopsis and cotton plants (PubMed:35887437).</text>
</comment>
<comment type="similarity">
    <text evidence="8">Belongs to the chitin synthase family. Class V subfamily.</text>
</comment>
<protein>
    <recommendedName>
        <fullName evidence="7">Chitin synthase 5</fullName>
        <ecNumber evidence="9">2.4.1.16</ecNumber>
    </recommendedName>
    <alternativeName>
        <fullName evidence="8">Chitin-UDP acetyl-glucosaminyl transferase 5</fullName>
    </alternativeName>
    <alternativeName>
        <fullName evidence="8">Class-V chitin synthase 5</fullName>
    </alternativeName>
</protein>
<sequence>MTNPRMSMYSLASEAPGGNRGTGQQSTQVSTTTLLNAIHNIYLSAQPYRLDAGTSTVVNTWLTASQTGPNGSIGGTVDASLGASAWEHARRRAEDGCIVLGSLHESTPSVLAPFLSSLPMSTPSSLYKALDAIQPFLRCSTPYNPSTPRQAALGVTLTINLAGNLTAASIALSQGGIDTTKGLMNIPSEAGYRAFDVFYYLLTSASTPAEREFLGLKPASQYALLARSGTYDPPSYLPTADDAAAAEDFRTALKEIGIKGASHRSFISTLAGLLKLGNTLDYNVDEDVLEDVCEDVSGLLGMEPEVLMKQCTTEDRSTFVGGLYEALVDWVITKANVAIAAQMARIKDGAESLDGRGVRTPTSNEEGEDTVCISVIEIPNPTLGKALALRGIFDDSMGINSEMIADGIEVPATGSSVLREMQNAVAEVAPDLGISSTPASRERQHELEKREEILEKIGLSADDDGFIKQLLFPVAGEGINLGTHSRLDLPALLASSRVWYHLSLHPTDDSPASLAALPSVTSAWSAGTVSRQLRAWRLPEWANRRNKNLDFTADFDVEEFVQRYSALGCKDGRDGIETWLLERGWSNGEVIVGKERVWMRESAWWEAESMLDLKPLNNLPGVGNMMAVNQLESGYSNNGSGYFPGQVILDDHSGSNGVVNHQRNFSHGNMSQATFNQNPVAAPSIAPTRMTGMTGMRNVAVGDYGLGHKGDTHKGAVYYNEDGEFIGPLDPELANGKQIETKSLPMKRRVWVFIVWAFTWWIPSPLLRYVGRMKRPDVRMAWREKLVLCFFIFLMNALIVFWIVAFGRLLCPNFDKAYSQKEVDTHQGQSDFWVSIHGKVYDISKFWKQQHSDQDIETTRENMLPLAGMNLDDYFVAPLPLTCPGLDIEDTFRLDLNNTLEFQIADHTSGYYQPNPATKLRAADWYSKRFEPRIKEYFHGDLVWSKGTVRKQGENDGRQWVIYDDKIYDLTNYFYTQKRLKNLGGSNFLNEKLINVIKQNPGADVTDQWNDILERAAGNATENQSAQNSMNCIRNTFYKGITDFRETPRCTVNNWLLLAFSIMLCAVILLKFVSALQFGSKRRPSPQDKFVICQVPAYTEGEESLRKALDSLTALQYDNKRKLICVICDGVIVGQGNDRPTPKIVLDILGVDPKIDPPALAFKSVGTGSEQLNYGKVYSGLYEFEGNVVPYLVVVKVGKESEQSKTKPGNRGKRDSQILLMSFLNRVHHRSPMNPLELEMFHQINNIIGVDPELYEYLFMVDADTSVREDSLNRLVAACANDGKIAGICGETALQNDEKTWWTMIQVYEYFISHHLAKAFESLFGSVTCLPGCFTMYRLRTADKGKPLIISDGVIQEYSVCDVDTLHKKNLLALGEDRYLTTLMTKHFPFMSYKFIPDAYCQTAAPESWSVLLSQRRRWINSTMHNLFELMQLKEMCGFCCFSMRFVVFIDLFGTIILPATCVYLGYLIYLVSSGTGQFPLISIIMLAAVYGLQALIFILKRQWQHIGWMIIYILAFPIYSFVLPIYSFWNQDNFSWGNTRIVIGEKGNKQIVAVDDEGYDPRSVPLQRWDDYAQANQLPGRRGGYPEKYEGEYQDQYEMDEMKSVYSSVRQGSVITGMQNRQNPYMPPQSPALFGTPSPGHMTRHSTMTGAGPFADPHLAHRQSMASMGAHDIQRTQSPYADYPTRSMGNLHGHASNPSLMGGNRSSTALGFAGGNRAAEASSSTFDFQRGLAGPDDGMIVEAIRTVLMEVDLDTVTKKQVRALVEQRLQSELVGERRTFMDRQIDHELANM</sequence>